<organism>
    <name type="scientific">Procambarus clarkii</name>
    <name type="common">Red swamp crayfish</name>
    <dbReference type="NCBI Taxonomy" id="6728"/>
    <lineage>
        <taxon>Eukaryota</taxon>
        <taxon>Metazoa</taxon>
        <taxon>Ecdysozoa</taxon>
        <taxon>Arthropoda</taxon>
        <taxon>Crustacea</taxon>
        <taxon>Multicrustacea</taxon>
        <taxon>Malacostraca</taxon>
        <taxon>Eumalacostraca</taxon>
        <taxon>Eucarida</taxon>
        <taxon>Decapoda</taxon>
        <taxon>Pleocyemata</taxon>
        <taxon>Astacidea</taxon>
        <taxon>Astacoidea</taxon>
        <taxon>Cambaridae</taxon>
        <taxon>Procambarus</taxon>
    </lineage>
</organism>
<name>FAR1_PROCL</name>
<protein>
    <recommendedName>
        <fullName>Cardio-excitatory FMRFamide homolog NF1</fullName>
    </recommendedName>
</protein>
<feature type="peptide" id="PRO_0000043704" description="Cardio-excitatory FMRFamide homolog NF1">
    <location>
        <begin position="1"/>
        <end position="7"/>
    </location>
</feature>
<feature type="modified residue" description="Phenylalanine amide" evidence="1">
    <location>
        <position position="7"/>
    </location>
</feature>
<keyword id="KW-0027">Amidation</keyword>
<keyword id="KW-0903">Direct protein sequencing</keyword>
<keyword id="KW-0527">Neuropeptide</keyword>
<keyword id="KW-0964">Secreted</keyword>
<proteinExistence type="evidence at protein level"/>
<sequence length="7" mass="966">NRNFLRF</sequence>
<reference key="1">
    <citation type="journal article" date="1993" name="Peptides">
        <title>Isolation of two FMRFamide-related peptides from crayfish pericardial organs.</title>
        <authorList>
            <person name="Mercier A.J."/>
            <person name="Orchard I."/>
            <person name="Tebrugge V."/>
            <person name="Skerrett M."/>
        </authorList>
    </citation>
    <scope>PROTEIN SEQUENCE</scope>
    <scope>AMIDATION AT PHE-7</scope>
    <source>
        <tissue>Pericardial organs</tissue>
    </source>
</reference>
<comment type="function">
    <text>Increases the rate and amplitude of spontaneous contractions of semi-isolated hearts. Increases the amplitude of excitatory postsynaptic potentials in abdominal extensor muscle.</text>
</comment>
<comment type="subcellular location">
    <subcellularLocation>
        <location>Secreted</location>
    </subcellularLocation>
</comment>
<comment type="similarity">
    <text evidence="2">Belongs to the FARP (FMRFamide related peptide) family.</text>
</comment>
<dbReference type="GO" id="GO:0005576">
    <property type="term" value="C:extracellular region"/>
    <property type="evidence" value="ECO:0007669"/>
    <property type="project" value="UniProtKB-SubCell"/>
</dbReference>
<dbReference type="GO" id="GO:0007218">
    <property type="term" value="P:neuropeptide signaling pathway"/>
    <property type="evidence" value="ECO:0007669"/>
    <property type="project" value="UniProtKB-KW"/>
</dbReference>
<accession>P38499</accession>
<evidence type="ECO:0000269" key="1">
    <source>
    </source>
</evidence>
<evidence type="ECO:0000305" key="2"/>